<dbReference type="EC" id="2.1.2.9" evidence="1"/>
<dbReference type="EMBL" id="CP000768">
    <property type="protein sequence ID" value="ABS43143.1"/>
    <property type="molecule type" value="Genomic_DNA"/>
</dbReference>
<dbReference type="SMR" id="A7H1H2"/>
<dbReference type="KEGG" id="cjd:JJD26997_0105"/>
<dbReference type="HOGENOM" id="CLU_033347_1_1_7"/>
<dbReference type="Proteomes" id="UP000002302">
    <property type="component" value="Chromosome"/>
</dbReference>
<dbReference type="GO" id="GO:0005829">
    <property type="term" value="C:cytosol"/>
    <property type="evidence" value="ECO:0007669"/>
    <property type="project" value="TreeGrafter"/>
</dbReference>
<dbReference type="GO" id="GO:0004479">
    <property type="term" value="F:methionyl-tRNA formyltransferase activity"/>
    <property type="evidence" value="ECO:0007669"/>
    <property type="project" value="UniProtKB-UniRule"/>
</dbReference>
<dbReference type="CDD" id="cd08646">
    <property type="entry name" value="FMT_core_Met-tRNA-FMT_N"/>
    <property type="match status" value="1"/>
</dbReference>
<dbReference type="CDD" id="cd08704">
    <property type="entry name" value="Met_tRNA_FMT_C"/>
    <property type="match status" value="1"/>
</dbReference>
<dbReference type="Gene3D" id="3.40.50.12230">
    <property type="match status" value="1"/>
</dbReference>
<dbReference type="HAMAP" id="MF_00182">
    <property type="entry name" value="Formyl_trans"/>
    <property type="match status" value="1"/>
</dbReference>
<dbReference type="InterPro" id="IPR005794">
    <property type="entry name" value="Fmt"/>
</dbReference>
<dbReference type="InterPro" id="IPR005793">
    <property type="entry name" value="Formyl_trans_C"/>
</dbReference>
<dbReference type="InterPro" id="IPR002376">
    <property type="entry name" value="Formyl_transf_N"/>
</dbReference>
<dbReference type="InterPro" id="IPR036477">
    <property type="entry name" value="Formyl_transf_N_sf"/>
</dbReference>
<dbReference type="InterPro" id="IPR011034">
    <property type="entry name" value="Formyl_transferase-like_C_sf"/>
</dbReference>
<dbReference type="InterPro" id="IPR001555">
    <property type="entry name" value="GART_AS"/>
</dbReference>
<dbReference type="InterPro" id="IPR044135">
    <property type="entry name" value="Met-tRNA-FMT_C"/>
</dbReference>
<dbReference type="InterPro" id="IPR041711">
    <property type="entry name" value="Met-tRNA-FMT_N"/>
</dbReference>
<dbReference type="NCBIfam" id="TIGR00460">
    <property type="entry name" value="fmt"/>
    <property type="match status" value="1"/>
</dbReference>
<dbReference type="PANTHER" id="PTHR11138">
    <property type="entry name" value="METHIONYL-TRNA FORMYLTRANSFERASE"/>
    <property type="match status" value="1"/>
</dbReference>
<dbReference type="PANTHER" id="PTHR11138:SF5">
    <property type="entry name" value="METHIONYL-TRNA FORMYLTRANSFERASE, MITOCHONDRIAL"/>
    <property type="match status" value="1"/>
</dbReference>
<dbReference type="Pfam" id="PF02911">
    <property type="entry name" value="Formyl_trans_C"/>
    <property type="match status" value="1"/>
</dbReference>
<dbReference type="Pfam" id="PF00551">
    <property type="entry name" value="Formyl_trans_N"/>
    <property type="match status" value="1"/>
</dbReference>
<dbReference type="SUPFAM" id="SSF50486">
    <property type="entry name" value="FMT C-terminal domain-like"/>
    <property type="match status" value="1"/>
</dbReference>
<dbReference type="SUPFAM" id="SSF53328">
    <property type="entry name" value="Formyltransferase"/>
    <property type="match status" value="1"/>
</dbReference>
<dbReference type="PROSITE" id="PS00373">
    <property type="entry name" value="GART"/>
    <property type="match status" value="1"/>
</dbReference>
<evidence type="ECO:0000255" key="1">
    <source>
        <dbReference type="HAMAP-Rule" id="MF_00182"/>
    </source>
</evidence>
<sequence length="305" mass="34087">MKKIIFMGTPSYATCILKALVENENFKLVALFTQPDKAVGRKQILTPSDTKAFLSQNYPSIPIFTPSSLKDENIMRQIKDLNPDFIVVAAYGKILPKAILDLAPCVNLHASLLPKYRGASPIQSAILNKDEKSGVCTMLMEEGLDTGAILESLECDIKDKNSSEVFELLANLAAKLILSTLLNFDKITPKKQEESLATLCRKIKKEDGLINLQNARELYQKYLAFTPWPGVFLENGLKFLELELVDELKQNAKMGEILELEKESFLLACKQGVLRIKKLQESGKKALDGRTYLNGKRLKSEDSLC</sequence>
<keyword id="KW-0648">Protein biosynthesis</keyword>
<keyword id="KW-0808">Transferase</keyword>
<name>FMT_CAMJD</name>
<reference key="1">
    <citation type="submission" date="2007-07" db="EMBL/GenBank/DDBJ databases">
        <title>Complete genome sequence of Campylobacter jejuni subsp doylei 269.97 isolated from human blood.</title>
        <authorList>
            <person name="Fouts D.E."/>
            <person name="Mongodin E.F."/>
            <person name="Puiu D."/>
            <person name="Sebastian Y."/>
            <person name="Miller W.G."/>
            <person name="Mandrell R.E."/>
            <person name="Lastovica A.J."/>
            <person name="Nelson K.E."/>
        </authorList>
    </citation>
    <scope>NUCLEOTIDE SEQUENCE [LARGE SCALE GENOMIC DNA]</scope>
    <source>
        <strain>ATCC BAA-1458 / RM4099 / 269.97</strain>
    </source>
</reference>
<comment type="function">
    <text evidence="1">Attaches a formyl group to the free amino group of methionyl-tRNA(fMet). The formyl group appears to play a dual role in the initiator identity of N-formylmethionyl-tRNA by promoting its recognition by IF2 and preventing the misappropriation of this tRNA by the elongation apparatus.</text>
</comment>
<comment type="catalytic activity">
    <reaction evidence="1">
        <text>L-methionyl-tRNA(fMet) + (6R)-10-formyltetrahydrofolate = N-formyl-L-methionyl-tRNA(fMet) + (6S)-5,6,7,8-tetrahydrofolate + H(+)</text>
        <dbReference type="Rhea" id="RHEA:24380"/>
        <dbReference type="Rhea" id="RHEA-COMP:9952"/>
        <dbReference type="Rhea" id="RHEA-COMP:9953"/>
        <dbReference type="ChEBI" id="CHEBI:15378"/>
        <dbReference type="ChEBI" id="CHEBI:57453"/>
        <dbReference type="ChEBI" id="CHEBI:78530"/>
        <dbReference type="ChEBI" id="CHEBI:78844"/>
        <dbReference type="ChEBI" id="CHEBI:195366"/>
        <dbReference type="EC" id="2.1.2.9"/>
    </reaction>
</comment>
<comment type="similarity">
    <text evidence="1">Belongs to the Fmt family.</text>
</comment>
<feature type="chain" id="PRO_1000020042" description="Methionyl-tRNA formyltransferase">
    <location>
        <begin position="1"/>
        <end position="305"/>
    </location>
</feature>
<feature type="binding site" evidence="1">
    <location>
        <begin position="111"/>
        <end position="114"/>
    </location>
    <ligand>
        <name>(6S)-5,6,7,8-tetrahydrofolate</name>
        <dbReference type="ChEBI" id="CHEBI:57453"/>
    </ligand>
</feature>
<proteinExistence type="inferred from homology"/>
<organism>
    <name type="scientific">Campylobacter jejuni subsp. doylei (strain ATCC BAA-1458 / RM4099 / 269.97)</name>
    <dbReference type="NCBI Taxonomy" id="360109"/>
    <lineage>
        <taxon>Bacteria</taxon>
        <taxon>Pseudomonadati</taxon>
        <taxon>Campylobacterota</taxon>
        <taxon>Epsilonproteobacteria</taxon>
        <taxon>Campylobacterales</taxon>
        <taxon>Campylobacteraceae</taxon>
        <taxon>Campylobacter</taxon>
    </lineage>
</organism>
<accession>A7H1H2</accession>
<protein>
    <recommendedName>
        <fullName evidence="1">Methionyl-tRNA formyltransferase</fullName>
        <ecNumber evidence="1">2.1.2.9</ecNumber>
    </recommendedName>
</protein>
<gene>
    <name evidence="1" type="primary">fmt</name>
    <name type="ordered locus">JJD26997_0105</name>
</gene>